<gene>
    <name evidence="1" type="primary">trpA</name>
    <name type="ordered locus">VNG_0308G</name>
</gene>
<sequence length="276" mass="28448">MTRSDLAAAFDDGPALVSYVVAGDPTPAATAEYIDALVDGGTDVIELGLPFSEPVAEGTTIQNAIKRALDAGMTPDAYLDLVARIDADVPVVCMTYYNLLFQYGDRAGPAAFVSAAAEAGVSGFVVPDLPVDESGPLREACRAHGLDLVFVVAPTTTADRRERMLDLTTGFVYVQGRVGTTGAREEVSAATPDALAALQHTDIPKAVGFGVSSGEQAREITASGADGVIVGSAYVDTVADGVADDDPPSVVADRLRDLAAELKAGAARGVPEPEHK</sequence>
<accession>Q9HSB9</accession>
<keyword id="KW-0028">Amino-acid biosynthesis</keyword>
<keyword id="KW-0057">Aromatic amino acid biosynthesis</keyword>
<keyword id="KW-0456">Lyase</keyword>
<keyword id="KW-1185">Reference proteome</keyword>
<keyword id="KW-0822">Tryptophan biosynthesis</keyword>
<organism>
    <name type="scientific">Halobacterium salinarum (strain ATCC 700922 / JCM 11081 / NRC-1)</name>
    <name type="common">Halobacterium halobium</name>
    <dbReference type="NCBI Taxonomy" id="64091"/>
    <lineage>
        <taxon>Archaea</taxon>
        <taxon>Methanobacteriati</taxon>
        <taxon>Methanobacteriota</taxon>
        <taxon>Stenosarchaea group</taxon>
        <taxon>Halobacteria</taxon>
        <taxon>Halobacteriales</taxon>
        <taxon>Halobacteriaceae</taxon>
        <taxon>Halobacterium</taxon>
        <taxon>Halobacterium salinarum NRC-34001</taxon>
    </lineage>
</organism>
<proteinExistence type="inferred from homology"/>
<reference key="1">
    <citation type="journal article" date="2000" name="Proc. Natl. Acad. Sci. U.S.A.">
        <title>Genome sequence of Halobacterium species NRC-1.</title>
        <authorList>
            <person name="Ng W.V."/>
            <person name="Kennedy S.P."/>
            <person name="Mahairas G.G."/>
            <person name="Berquist B."/>
            <person name="Pan M."/>
            <person name="Shukla H.D."/>
            <person name="Lasky S.R."/>
            <person name="Baliga N.S."/>
            <person name="Thorsson V."/>
            <person name="Sbrogna J."/>
            <person name="Swartzell S."/>
            <person name="Weir D."/>
            <person name="Hall J."/>
            <person name="Dahl T.A."/>
            <person name="Welti R."/>
            <person name="Goo Y.A."/>
            <person name="Leithauser B."/>
            <person name="Keller K."/>
            <person name="Cruz R."/>
            <person name="Danson M.J."/>
            <person name="Hough D.W."/>
            <person name="Maddocks D.G."/>
            <person name="Jablonski P.E."/>
            <person name="Krebs M.P."/>
            <person name="Angevine C.M."/>
            <person name="Dale H."/>
            <person name="Isenbarger T.A."/>
            <person name="Peck R.F."/>
            <person name="Pohlschroder M."/>
            <person name="Spudich J.L."/>
            <person name="Jung K.-H."/>
            <person name="Alam M."/>
            <person name="Freitas T."/>
            <person name="Hou S."/>
            <person name="Daniels C.J."/>
            <person name="Dennis P.P."/>
            <person name="Omer A.D."/>
            <person name="Ebhardt H."/>
            <person name="Lowe T.M."/>
            <person name="Liang P."/>
            <person name="Riley M."/>
            <person name="Hood L."/>
            <person name="DasSarma S."/>
        </authorList>
    </citation>
    <scope>NUCLEOTIDE SEQUENCE [LARGE SCALE GENOMIC DNA]</scope>
    <source>
        <strain>ATCC 700922 / JCM 11081 / NRC-1</strain>
    </source>
</reference>
<feature type="chain" id="PRO_0000098886" description="Tryptophan synthase alpha chain">
    <location>
        <begin position="1"/>
        <end position="276"/>
    </location>
</feature>
<feature type="active site" description="Proton acceptor" evidence="1">
    <location>
        <position position="46"/>
    </location>
</feature>
<feature type="active site" description="Proton acceptor" evidence="1">
    <location>
        <position position="57"/>
    </location>
</feature>
<name>TRPA_HALSA</name>
<dbReference type="EC" id="4.2.1.20" evidence="1"/>
<dbReference type="EMBL" id="AE004437">
    <property type="protein sequence ID" value="AAG18888.1"/>
    <property type="status" value="ALT_INIT"/>
    <property type="molecule type" value="Genomic_DNA"/>
</dbReference>
<dbReference type="PIR" id="D84190">
    <property type="entry name" value="D84190"/>
</dbReference>
<dbReference type="RefSeq" id="WP_010902182.1">
    <property type="nucleotide sequence ID" value="NC_002607.1"/>
</dbReference>
<dbReference type="SMR" id="Q9HSB9"/>
<dbReference type="FunCoup" id="Q9HSB9">
    <property type="interactions" value="64"/>
</dbReference>
<dbReference type="STRING" id="64091.VNG_0308G"/>
<dbReference type="PaxDb" id="64091-VNG_0308G"/>
<dbReference type="GeneID" id="68693255"/>
<dbReference type="KEGG" id="hal:VNG_0308G"/>
<dbReference type="PATRIC" id="fig|64091.14.peg.227"/>
<dbReference type="HOGENOM" id="CLU_016734_0_0_2"/>
<dbReference type="InParanoid" id="Q9HSB9"/>
<dbReference type="OrthoDB" id="25658at2157"/>
<dbReference type="PhylomeDB" id="Q9HSB9"/>
<dbReference type="UniPathway" id="UPA00035">
    <property type="reaction ID" value="UER00044"/>
</dbReference>
<dbReference type="Proteomes" id="UP000000554">
    <property type="component" value="Chromosome"/>
</dbReference>
<dbReference type="GO" id="GO:0005829">
    <property type="term" value="C:cytosol"/>
    <property type="evidence" value="ECO:0000318"/>
    <property type="project" value="GO_Central"/>
</dbReference>
<dbReference type="GO" id="GO:0004834">
    <property type="term" value="F:tryptophan synthase activity"/>
    <property type="evidence" value="ECO:0000318"/>
    <property type="project" value="GO_Central"/>
</dbReference>
<dbReference type="GO" id="GO:0000162">
    <property type="term" value="P:L-tryptophan biosynthetic process"/>
    <property type="evidence" value="ECO:0000318"/>
    <property type="project" value="GO_Central"/>
</dbReference>
<dbReference type="CDD" id="cd04724">
    <property type="entry name" value="Tryptophan_synthase_alpha"/>
    <property type="match status" value="1"/>
</dbReference>
<dbReference type="FunFam" id="3.20.20.70:FF:000037">
    <property type="entry name" value="Tryptophan synthase alpha chain"/>
    <property type="match status" value="1"/>
</dbReference>
<dbReference type="Gene3D" id="3.20.20.70">
    <property type="entry name" value="Aldolase class I"/>
    <property type="match status" value="1"/>
</dbReference>
<dbReference type="HAMAP" id="MF_00131">
    <property type="entry name" value="Trp_synth_alpha"/>
    <property type="match status" value="1"/>
</dbReference>
<dbReference type="InterPro" id="IPR013785">
    <property type="entry name" value="Aldolase_TIM"/>
</dbReference>
<dbReference type="InterPro" id="IPR011060">
    <property type="entry name" value="RibuloseP-bd_barrel"/>
</dbReference>
<dbReference type="InterPro" id="IPR018204">
    <property type="entry name" value="Trp_synthase_alpha_AS"/>
</dbReference>
<dbReference type="InterPro" id="IPR002028">
    <property type="entry name" value="Trp_synthase_suA"/>
</dbReference>
<dbReference type="NCBIfam" id="TIGR00262">
    <property type="entry name" value="trpA"/>
    <property type="match status" value="1"/>
</dbReference>
<dbReference type="PANTHER" id="PTHR43406:SF1">
    <property type="entry name" value="TRYPTOPHAN SYNTHASE ALPHA CHAIN, CHLOROPLASTIC"/>
    <property type="match status" value="1"/>
</dbReference>
<dbReference type="PANTHER" id="PTHR43406">
    <property type="entry name" value="TRYPTOPHAN SYNTHASE, ALPHA CHAIN"/>
    <property type="match status" value="1"/>
</dbReference>
<dbReference type="Pfam" id="PF00290">
    <property type="entry name" value="Trp_syntA"/>
    <property type="match status" value="1"/>
</dbReference>
<dbReference type="SUPFAM" id="SSF51366">
    <property type="entry name" value="Ribulose-phoshate binding barrel"/>
    <property type="match status" value="1"/>
</dbReference>
<dbReference type="PROSITE" id="PS00167">
    <property type="entry name" value="TRP_SYNTHASE_ALPHA"/>
    <property type="match status" value="1"/>
</dbReference>
<protein>
    <recommendedName>
        <fullName evidence="1">Tryptophan synthase alpha chain</fullName>
        <ecNumber evidence="1">4.2.1.20</ecNumber>
    </recommendedName>
</protein>
<evidence type="ECO:0000255" key="1">
    <source>
        <dbReference type="HAMAP-Rule" id="MF_00131"/>
    </source>
</evidence>
<evidence type="ECO:0000305" key="2"/>
<comment type="function">
    <text evidence="1">The alpha subunit is responsible for the aldol cleavage of indoleglycerol phosphate to indole and glyceraldehyde 3-phosphate.</text>
</comment>
<comment type="catalytic activity">
    <reaction evidence="1">
        <text>(1S,2R)-1-C-(indol-3-yl)glycerol 3-phosphate + L-serine = D-glyceraldehyde 3-phosphate + L-tryptophan + H2O</text>
        <dbReference type="Rhea" id="RHEA:10532"/>
        <dbReference type="ChEBI" id="CHEBI:15377"/>
        <dbReference type="ChEBI" id="CHEBI:33384"/>
        <dbReference type="ChEBI" id="CHEBI:57912"/>
        <dbReference type="ChEBI" id="CHEBI:58866"/>
        <dbReference type="ChEBI" id="CHEBI:59776"/>
        <dbReference type="EC" id="4.2.1.20"/>
    </reaction>
</comment>
<comment type="pathway">
    <text evidence="1">Amino-acid biosynthesis; L-tryptophan biosynthesis; L-tryptophan from chorismate: step 5/5.</text>
</comment>
<comment type="subunit">
    <text evidence="1">Tetramer of two alpha and two beta chains.</text>
</comment>
<comment type="similarity">
    <text evidence="1">Belongs to the TrpA family.</text>
</comment>
<comment type="sequence caution" evidence="2">
    <conflict type="erroneous initiation">
        <sequence resource="EMBL-CDS" id="AAG18888"/>
    </conflict>
</comment>